<accession>B0TJ39</accession>
<organism>
    <name type="scientific">Shewanella halifaxensis (strain HAW-EB4)</name>
    <dbReference type="NCBI Taxonomy" id="458817"/>
    <lineage>
        <taxon>Bacteria</taxon>
        <taxon>Pseudomonadati</taxon>
        <taxon>Pseudomonadota</taxon>
        <taxon>Gammaproteobacteria</taxon>
        <taxon>Alteromonadales</taxon>
        <taxon>Shewanellaceae</taxon>
        <taxon>Shewanella</taxon>
    </lineage>
</organism>
<sequence>MFDQTTHTEVHQLTVGKIETASGAIKPQLLRDAVKRAVTNFFAQMDGQEAEEVYEMVLSEVEAPLLDIIMQHTRGNQTRAANMLGINRGTLRKKLKKYGMN</sequence>
<keyword id="KW-0010">Activator</keyword>
<keyword id="KW-0238">DNA-binding</keyword>
<keyword id="KW-0804">Transcription</keyword>
<keyword id="KW-0805">Transcription regulation</keyword>
<dbReference type="EMBL" id="CP000931">
    <property type="protein sequence ID" value="ABZ78442.1"/>
    <property type="molecule type" value="Genomic_DNA"/>
</dbReference>
<dbReference type="RefSeq" id="WP_012278959.1">
    <property type="nucleotide sequence ID" value="NC_010334.1"/>
</dbReference>
<dbReference type="SMR" id="B0TJ39"/>
<dbReference type="STRING" id="458817.Shal_3902"/>
<dbReference type="KEGG" id="shl:Shal_3902"/>
<dbReference type="eggNOG" id="COG2901">
    <property type="taxonomic scope" value="Bacteria"/>
</dbReference>
<dbReference type="HOGENOM" id="CLU_158040_3_3_6"/>
<dbReference type="OrthoDB" id="9802388at2"/>
<dbReference type="Proteomes" id="UP000001317">
    <property type="component" value="Chromosome"/>
</dbReference>
<dbReference type="GO" id="GO:0003700">
    <property type="term" value="F:DNA-binding transcription factor activity"/>
    <property type="evidence" value="ECO:0007669"/>
    <property type="project" value="UniProtKB-UniRule"/>
</dbReference>
<dbReference type="GO" id="GO:0043565">
    <property type="term" value="F:sequence-specific DNA binding"/>
    <property type="evidence" value="ECO:0007669"/>
    <property type="project" value="InterPro"/>
</dbReference>
<dbReference type="FunFam" id="1.10.10.60:FF:000006">
    <property type="entry name" value="DNA-binding protein Fis"/>
    <property type="match status" value="1"/>
</dbReference>
<dbReference type="Gene3D" id="1.10.10.60">
    <property type="entry name" value="Homeodomain-like"/>
    <property type="match status" value="1"/>
</dbReference>
<dbReference type="HAMAP" id="MF_00166">
    <property type="entry name" value="DNA_binding_Fis"/>
    <property type="match status" value="1"/>
</dbReference>
<dbReference type="InterPro" id="IPR005412">
    <property type="entry name" value="Fis_DNA-bd"/>
</dbReference>
<dbReference type="InterPro" id="IPR009057">
    <property type="entry name" value="Homeodomain-like_sf"/>
</dbReference>
<dbReference type="InterPro" id="IPR002197">
    <property type="entry name" value="HTH_Fis"/>
</dbReference>
<dbReference type="InterPro" id="IPR050207">
    <property type="entry name" value="Trans_regulatory_Fis"/>
</dbReference>
<dbReference type="NCBIfam" id="NF001659">
    <property type="entry name" value="PRK00430.1"/>
    <property type="match status" value="1"/>
</dbReference>
<dbReference type="PANTHER" id="PTHR47918">
    <property type="entry name" value="DNA-BINDING PROTEIN FIS"/>
    <property type="match status" value="1"/>
</dbReference>
<dbReference type="PANTHER" id="PTHR47918:SF1">
    <property type="entry name" value="DNA-BINDING PROTEIN FIS"/>
    <property type="match status" value="1"/>
</dbReference>
<dbReference type="Pfam" id="PF02954">
    <property type="entry name" value="HTH_8"/>
    <property type="match status" value="1"/>
</dbReference>
<dbReference type="PIRSF" id="PIRSF002097">
    <property type="entry name" value="DNA-binding_Fis"/>
    <property type="match status" value="1"/>
</dbReference>
<dbReference type="PRINTS" id="PR01591">
    <property type="entry name" value="DNABINDNGFIS"/>
</dbReference>
<dbReference type="PRINTS" id="PR01590">
    <property type="entry name" value="HTHFIS"/>
</dbReference>
<dbReference type="SUPFAM" id="SSF46689">
    <property type="entry name" value="Homeodomain-like"/>
    <property type="match status" value="1"/>
</dbReference>
<comment type="function">
    <text evidence="1">Activates ribosomal RNA transcription. Plays a direct role in upstream activation of rRNA promoters.</text>
</comment>
<comment type="subunit">
    <text evidence="1">Homodimer.</text>
</comment>
<comment type="similarity">
    <text evidence="1">Belongs to the transcriptional regulatory Fis family.</text>
</comment>
<evidence type="ECO:0000255" key="1">
    <source>
        <dbReference type="HAMAP-Rule" id="MF_00166"/>
    </source>
</evidence>
<name>FIS_SHEHH</name>
<reference key="1">
    <citation type="submission" date="2008-01" db="EMBL/GenBank/DDBJ databases">
        <title>Complete sequence of Shewanella halifaxensis HAW-EB4.</title>
        <authorList>
            <consortium name="US DOE Joint Genome Institute"/>
            <person name="Copeland A."/>
            <person name="Lucas S."/>
            <person name="Lapidus A."/>
            <person name="Glavina del Rio T."/>
            <person name="Dalin E."/>
            <person name="Tice H."/>
            <person name="Bruce D."/>
            <person name="Goodwin L."/>
            <person name="Pitluck S."/>
            <person name="Sims D."/>
            <person name="Brettin T."/>
            <person name="Detter J.C."/>
            <person name="Han C."/>
            <person name="Kuske C.R."/>
            <person name="Schmutz J."/>
            <person name="Larimer F."/>
            <person name="Land M."/>
            <person name="Hauser L."/>
            <person name="Kyrpides N."/>
            <person name="Kim E."/>
            <person name="Zhao J.-S."/>
            <person name="Richardson P."/>
        </authorList>
    </citation>
    <scope>NUCLEOTIDE SEQUENCE [LARGE SCALE GENOMIC DNA]</scope>
    <source>
        <strain>HAW-EB4</strain>
    </source>
</reference>
<proteinExistence type="inferred from homology"/>
<gene>
    <name evidence="1" type="primary">fis</name>
    <name type="ordered locus">Shal_3902</name>
</gene>
<protein>
    <recommendedName>
        <fullName evidence="1">DNA-binding protein Fis</fullName>
    </recommendedName>
</protein>
<feature type="chain" id="PRO_1000076985" description="DNA-binding protein Fis">
    <location>
        <begin position="1"/>
        <end position="101"/>
    </location>
</feature>
<feature type="DNA-binding region" description="H-T-H motif" evidence="1">
    <location>
        <begin position="77"/>
        <end position="96"/>
    </location>
</feature>